<accession>P54340</accession>
<keyword id="KW-1185">Reference proteome</keyword>
<gene>
    <name type="primary">xkdU</name>
    <name type="ordered locus">BSU12740</name>
</gene>
<proteinExistence type="predicted"/>
<reference key="1">
    <citation type="submission" date="1996-03" db="EMBL/GenBank/DDBJ databases">
        <authorList>
            <person name="Krogh S."/>
            <person name="O'Reilly M."/>
            <person name="Nolan N."/>
            <person name="Devine K.M."/>
        </authorList>
    </citation>
    <scope>NUCLEOTIDE SEQUENCE [GENOMIC DNA]</scope>
    <source>
        <strain>168</strain>
    </source>
</reference>
<reference key="2">
    <citation type="journal article" date="1997" name="Nature">
        <title>The complete genome sequence of the Gram-positive bacterium Bacillus subtilis.</title>
        <authorList>
            <person name="Kunst F."/>
            <person name="Ogasawara N."/>
            <person name="Moszer I."/>
            <person name="Albertini A.M."/>
            <person name="Alloni G."/>
            <person name="Azevedo V."/>
            <person name="Bertero M.G."/>
            <person name="Bessieres P."/>
            <person name="Bolotin A."/>
            <person name="Borchert S."/>
            <person name="Borriss R."/>
            <person name="Boursier L."/>
            <person name="Brans A."/>
            <person name="Braun M."/>
            <person name="Brignell S.C."/>
            <person name="Bron S."/>
            <person name="Brouillet S."/>
            <person name="Bruschi C.V."/>
            <person name="Caldwell B."/>
            <person name="Capuano V."/>
            <person name="Carter N.M."/>
            <person name="Choi S.-K."/>
            <person name="Codani J.-J."/>
            <person name="Connerton I.F."/>
            <person name="Cummings N.J."/>
            <person name="Daniel R.A."/>
            <person name="Denizot F."/>
            <person name="Devine K.M."/>
            <person name="Duesterhoeft A."/>
            <person name="Ehrlich S.D."/>
            <person name="Emmerson P.T."/>
            <person name="Entian K.-D."/>
            <person name="Errington J."/>
            <person name="Fabret C."/>
            <person name="Ferrari E."/>
            <person name="Foulger D."/>
            <person name="Fritz C."/>
            <person name="Fujita M."/>
            <person name="Fujita Y."/>
            <person name="Fuma S."/>
            <person name="Galizzi A."/>
            <person name="Galleron N."/>
            <person name="Ghim S.-Y."/>
            <person name="Glaser P."/>
            <person name="Goffeau A."/>
            <person name="Golightly E.J."/>
            <person name="Grandi G."/>
            <person name="Guiseppi G."/>
            <person name="Guy B.J."/>
            <person name="Haga K."/>
            <person name="Haiech J."/>
            <person name="Harwood C.R."/>
            <person name="Henaut A."/>
            <person name="Hilbert H."/>
            <person name="Holsappel S."/>
            <person name="Hosono S."/>
            <person name="Hullo M.-F."/>
            <person name="Itaya M."/>
            <person name="Jones L.-M."/>
            <person name="Joris B."/>
            <person name="Karamata D."/>
            <person name="Kasahara Y."/>
            <person name="Klaerr-Blanchard M."/>
            <person name="Klein C."/>
            <person name="Kobayashi Y."/>
            <person name="Koetter P."/>
            <person name="Koningstein G."/>
            <person name="Krogh S."/>
            <person name="Kumano M."/>
            <person name="Kurita K."/>
            <person name="Lapidus A."/>
            <person name="Lardinois S."/>
            <person name="Lauber J."/>
            <person name="Lazarevic V."/>
            <person name="Lee S.-M."/>
            <person name="Levine A."/>
            <person name="Liu H."/>
            <person name="Masuda S."/>
            <person name="Mauel C."/>
            <person name="Medigue C."/>
            <person name="Medina N."/>
            <person name="Mellado R.P."/>
            <person name="Mizuno M."/>
            <person name="Moestl D."/>
            <person name="Nakai S."/>
            <person name="Noback M."/>
            <person name="Noone D."/>
            <person name="O'Reilly M."/>
            <person name="Ogawa K."/>
            <person name="Ogiwara A."/>
            <person name="Oudega B."/>
            <person name="Park S.-H."/>
            <person name="Parro V."/>
            <person name="Pohl T.M."/>
            <person name="Portetelle D."/>
            <person name="Porwollik S."/>
            <person name="Prescott A.M."/>
            <person name="Presecan E."/>
            <person name="Pujic P."/>
            <person name="Purnelle B."/>
            <person name="Rapoport G."/>
            <person name="Rey M."/>
            <person name="Reynolds S."/>
            <person name="Rieger M."/>
            <person name="Rivolta C."/>
            <person name="Rocha E."/>
            <person name="Roche B."/>
            <person name="Rose M."/>
            <person name="Sadaie Y."/>
            <person name="Sato T."/>
            <person name="Scanlan E."/>
            <person name="Schleich S."/>
            <person name="Schroeter R."/>
            <person name="Scoffone F."/>
            <person name="Sekiguchi J."/>
            <person name="Sekowska A."/>
            <person name="Seror S.J."/>
            <person name="Serror P."/>
            <person name="Shin B.-S."/>
            <person name="Soldo B."/>
            <person name="Sorokin A."/>
            <person name="Tacconi E."/>
            <person name="Takagi T."/>
            <person name="Takahashi H."/>
            <person name="Takemaru K."/>
            <person name="Takeuchi M."/>
            <person name="Tamakoshi A."/>
            <person name="Tanaka T."/>
            <person name="Terpstra P."/>
            <person name="Tognoni A."/>
            <person name="Tosato V."/>
            <person name="Uchiyama S."/>
            <person name="Vandenbol M."/>
            <person name="Vannier F."/>
            <person name="Vassarotti A."/>
            <person name="Viari A."/>
            <person name="Wambutt R."/>
            <person name="Wedler E."/>
            <person name="Wedler H."/>
            <person name="Weitzenegger T."/>
            <person name="Winters P."/>
            <person name="Wipat A."/>
            <person name="Yamamoto H."/>
            <person name="Yamane K."/>
            <person name="Yasumoto K."/>
            <person name="Yata K."/>
            <person name="Yoshida K."/>
            <person name="Yoshikawa H.-F."/>
            <person name="Zumstein E."/>
            <person name="Yoshikawa H."/>
            <person name="Danchin A."/>
        </authorList>
    </citation>
    <scope>NUCLEOTIDE SEQUENCE [LARGE SCALE GENOMIC DNA]</scope>
    <source>
        <strain>168</strain>
    </source>
</reference>
<evidence type="ECO:0000305" key="1"/>
<name>XKDU_BACSU</name>
<sequence>MSKQDDMRAYLPPFLTSLKEMAELLKAEAPEFDKQNDSIFDLTDQLFVPTATWGLSRWEKILNVPRESGDTDEIRRLRLISKMSNIPPITYRAIEQAVNRFLKNPSAQVRLLPGEYRFNVDINVDDLQHMNELIEAIENMKPAHLAYTLRGGLNETLRIKDTVILNHRRYRTASELKVGYSVTLNNNEVVLT</sequence>
<organism>
    <name type="scientific">Bacillus subtilis (strain 168)</name>
    <dbReference type="NCBI Taxonomy" id="224308"/>
    <lineage>
        <taxon>Bacteria</taxon>
        <taxon>Bacillati</taxon>
        <taxon>Bacillota</taxon>
        <taxon>Bacilli</taxon>
        <taxon>Bacillales</taxon>
        <taxon>Bacillaceae</taxon>
        <taxon>Bacillus</taxon>
    </lineage>
</organism>
<comment type="similarity">
    <text evidence="1">To B.subtilis YqcA.</text>
</comment>
<dbReference type="EMBL" id="Z70177">
    <property type="protein sequence ID" value="CAA94042.1"/>
    <property type="molecule type" value="Genomic_DNA"/>
</dbReference>
<dbReference type="EMBL" id="AL009126">
    <property type="protein sequence ID" value="CAB13131.1"/>
    <property type="molecule type" value="Genomic_DNA"/>
</dbReference>
<dbReference type="PIR" id="D69733">
    <property type="entry name" value="D69733"/>
</dbReference>
<dbReference type="RefSeq" id="NP_389156.1">
    <property type="nucleotide sequence ID" value="NC_000964.3"/>
</dbReference>
<dbReference type="RefSeq" id="WP_003244743.1">
    <property type="nucleotide sequence ID" value="NZ_OZ025638.1"/>
</dbReference>
<dbReference type="SMR" id="P54340"/>
<dbReference type="FunCoup" id="P54340">
    <property type="interactions" value="48"/>
</dbReference>
<dbReference type="STRING" id="224308.BSU12740"/>
<dbReference type="PaxDb" id="224308-BSU12740"/>
<dbReference type="EnsemblBacteria" id="CAB13131">
    <property type="protein sequence ID" value="CAB13131"/>
    <property type="gene ID" value="BSU_12740"/>
</dbReference>
<dbReference type="GeneID" id="936476"/>
<dbReference type="KEGG" id="bsu:BSU12740"/>
<dbReference type="PATRIC" id="fig|224308.179.peg.1381"/>
<dbReference type="eggNOG" id="COG3778">
    <property type="taxonomic scope" value="Bacteria"/>
</dbReference>
<dbReference type="InParanoid" id="P54340"/>
<dbReference type="OrthoDB" id="1629754at2"/>
<dbReference type="PhylomeDB" id="P54340"/>
<dbReference type="BioCyc" id="BSUB:BSU12740-MONOMER"/>
<dbReference type="Proteomes" id="UP000001570">
    <property type="component" value="Chromosome"/>
</dbReference>
<dbReference type="InterPro" id="IPR018755">
    <property type="entry name" value="Phage_Mu_Gp48"/>
</dbReference>
<dbReference type="Pfam" id="PF10076">
    <property type="entry name" value="Phage_Mu_Gp48"/>
    <property type="match status" value="1"/>
</dbReference>
<feature type="chain" id="PRO_0000066033" description="Phage-like element PBSX protein XkdU">
    <location>
        <begin position="1"/>
        <end position="192"/>
    </location>
</feature>
<protein>
    <recommendedName>
        <fullName>Phage-like element PBSX protein XkdU</fullName>
    </recommendedName>
</protein>